<protein>
    <recommendedName>
        <fullName evidence="5">PPE family protein PPE18</fullName>
    </recommendedName>
</protein>
<evidence type="ECO:0000269" key="1">
    <source>
    </source>
</evidence>
<evidence type="ECO:0000269" key="2">
    <source>
    </source>
</evidence>
<evidence type="ECO:0000269" key="3">
    <source>
    </source>
</evidence>
<evidence type="ECO:0000269" key="4">
    <source>
    </source>
</evidence>
<evidence type="ECO:0000305" key="5"/>
<evidence type="ECO:0000312" key="6">
    <source>
        <dbReference type="EMBL" id="CCP43952.1"/>
    </source>
</evidence>
<proteinExistence type="evidence at protein level"/>
<name>PPE18_MYCTU</name>
<reference key="1">
    <citation type="journal article" date="1998" name="Nature">
        <title>Deciphering the biology of Mycobacterium tuberculosis from the complete genome sequence.</title>
        <authorList>
            <person name="Cole S.T."/>
            <person name="Brosch R."/>
            <person name="Parkhill J."/>
            <person name="Garnier T."/>
            <person name="Churcher C.M."/>
            <person name="Harris D.E."/>
            <person name="Gordon S.V."/>
            <person name="Eiglmeier K."/>
            <person name="Gas S."/>
            <person name="Barry C.E. III"/>
            <person name="Tekaia F."/>
            <person name="Badcock K."/>
            <person name="Basham D."/>
            <person name="Brown D."/>
            <person name="Chillingworth T."/>
            <person name="Connor R."/>
            <person name="Davies R.M."/>
            <person name="Devlin K."/>
            <person name="Feltwell T."/>
            <person name="Gentles S."/>
            <person name="Hamlin N."/>
            <person name="Holroyd S."/>
            <person name="Hornsby T."/>
            <person name="Jagels K."/>
            <person name="Krogh A."/>
            <person name="McLean J."/>
            <person name="Moule S."/>
            <person name="Murphy L.D."/>
            <person name="Oliver S."/>
            <person name="Osborne J."/>
            <person name="Quail M.A."/>
            <person name="Rajandream M.A."/>
            <person name="Rogers J."/>
            <person name="Rutter S."/>
            <person name="Seeger K."/>
            <person name="Skelton S."/>
            <person name="Squares S."/>
            <person name="Squares R."/>
            <person name="Sulston J.E."/>
            <person name="Taylor K."/>
            <person name="Whitehead S."/>
            <person name="Barrell B.G."/>
        </authorList>
    </citation>
    <scope>NUCLEOTIDE SEQUENCE [LARGE SCALE GENOMIC DNA]</scope>
    <source>
        <strain>ATCC 25618 / H37Rv</strain>
    </source>
</reference>
<reference key="2">
    <citation type="journal article" date="2009" name="Infect. Immun.">
        <title>The transcriptional regulator Rv0485 modulates the expression of a pe and ppe gene pair and is required for Mycobacterium tuberculosis virulence.</title>
        <authorList>
            <person name="Goldstone R.M."/>
            <person name="Goonesekera S.D."/>
            <person name="Bloom B.R."/>
            <person name="Sampson S.L."/>
        </authorList>
    </citation>
    <scope>INDUCTION</scope>
    <source>
        <strain>H37Rv</strain>
    </source>
</reference>
<reference key="3">
    <citation type="journal article" date="2009" name="J. Immunol.">
        <title>The PPE18 of Mycobacterium tuberculosis interacts with TLR2 and activates IL-10 induction in macrophage.</title>
        <authorList>
            <person name="Nair S."/>
            <person name="Ramaswamy P.A."/>
            <person name="Ghosh S."/>
            <person name="Joshi D.C."/>
            <person name="Pathak N."/>
            <person name="Siddiqui I."/>
            <person name="Sharma P."/>
            <person name="Hasnain S.E."/>
            <person name="Mande S.C."/>
            <person name="Mukhopadhyay S."/>
        </authorList>
    </citation>
    <scope>FUNCTION</scope>
    <scope>INTERACTION WITH TLR2</scope>
    <scope>SUBCELLULAR LOCATION</scope>
    <scope>DOMAIN</scope>
    <source>
        <strain>H37Rv</strain>
    </source>
</reference>
<reference key="4">
    <citation type="journal article" date="2011" name="J. Immunol.">
        <title>The PPE18 protein of Mycobacterium tuberculosis inhibits NF-kappaB/rel-mediated proinflammatory cytokine production by upregulating and phosphorylating suppressor of cytokine signaling 3 protein.</title>
        <authorList>
            <person name="Nair S."/>
            <person name="Pandey A.D."/>
            <person name="Mukhopadhyay S."/>
        </authorList>
    </citation>
    <scope>FUNCTION</scope>
    <scope>DOMAIN</scope>
</reference>
<reference key="5">
    <citation type="journal article" date="2011" name="Mol. Cell. Proteomics">
        <title>Proteogenomic analysis of Mycobacterium tuberculosis by high resolution mass spectrometry.</title>
        <authorList>
            <person name="Kelkar D.S."/>
            <person name="Kumar D."/>
            <person name="Kumar P."/>
            <person name="Balakrishnan L."/>
            <person name="Muthusamy B."/>
            <person name="Yadav A.K."/>
            <person name="Shrivastava P."/>
            <person name="Marimuthu A."/>
            <person name="Anand S."/>
            <person name="Sundaram H."/>
            <person name="Kingsbury R."/>
            <person name="Harsha H.C."/>
            <person name="Nair B."/>
            <person name="Prasad T.S."/>
            <person name="Chauhan D.S."/>
            <person name="Katoch K."/>
            <person name="Katoch V.M."/>
            <person name="Kumar P."/>
            <person name="Chaerkady R."/>
            <person name="Ramachandran S."/>
            <person name="Dash D."/>
            <person name="Pandey A."/>
        </authorList>
    </citation>
    <scope>IDENTIFICATION BY MASS SPECTROMETRY [LARGE SCALE ANALYSIS]</scope>
    <source>
        <strain>ATCC 25618 / H37Rv</strain>
    </source>
</reference>
<reference key="6">
    <citation type="journal article" date="2012" name="PLoS ONE">
        <title>Role of PPE18 protein in intracellular survival and pathogenicity of Mycobacterium tuberculosis in mice.</title>
        <authorList>
            <person name="Bhat K.H."/>
            <person name="Ahmed A."/>
            <person name="Kumar S."/>
            <person name="Sharma P."/>
            <person name="Mukhopadhyay S."/>
        </authorList>
    </citation>
    <scope>FUNCTION IN VIRULENCE</scope>
    <scope>DISRUPTION PHENOTYPE</scope>
</reference>
<dbReference type="EMBL" id="AL123456">
    <property type="protein sequence ID" value="CCP43952.1"/>
    <property type="molecule type" value="Genomic_DNA"/>
</dbReference>
<dbReference type="RefSeq" id="WP_003898765.1">
    <property type="nucleotide sequence ID" value="NZ_NVQJ01000025.1"/>
</dbReference>
<dbReference type="RefSeq" id="YP_177795.1">
    <property type="nucleotide sequence ID" value="NC_000962.3"/>
</dbReference>
<dbReference type="SMR" id="L7N675"/>
<dbReference type="STRING" id="83332.Rv1196"/>
<dbReference type="PaxDb" id="83332-Rv1196"/>
<dbReference type="DNASU" id="886073"/>
<dbReference type="GeneID" id="886073"/>
<dbReference type="KEGG" id="mtu:Rv1196"/>
<dbReference type="KEGG" id="mtv:RVBD_1196"/>
<dbReference type="PATRIC" id="fig|83332.111.peg.1337"/>
<dbReference type="TubercuList" id="Rv1196"/>
<dbReference type="eggNOG" id="COG5651">
    <property type="taxonomic scope" value="Bacteria"/>
</dbReference>
<dbReference type="HOGENOM" id="CLU_000243_0_0_11"/>
<dbReference type="InParanoid" id="L7N675"/>
<dbReference type="OrthoDB" id="4710842at2"/>
<dbReference type="PhylomeDB" id="L7N675"/>
<dbReference type="Proteomes" id="UP000001584">
    <property type="component" value="Chromosome"/>
</dbReference>
<dbReference type="GO" id="GO:0009986">
    <property type="term" value="C:cell surface"/>
    <property type="evidence" value="ECO:0007669"/>
    <property type="project" value="UniProtKB-SubCell"/>
</dbReference>
<dbReference type="GO" id="GO:0005576">
    <property type="term" value="C:extracellular region"/>
    <property type="evidence" value="ECO:0007669"/>
    <property type="project" value="UniProtKB-KW"/>
</dbReference>
<dbReference type="GO" id="GO:0052572">
    <property type="term" value="P:response to host immune response"/>
    <property type="evidence" value="ECO:0000318"/>
    <property type="project" value="GO_Central"/>
</dbReference>
<dbReference type="FunFam" id="1.20.1260.20:FF:000001">
    <property type="entry name" value="PPE family protein PPE41"/>
    <property type="match status" value="1"/>
</dbReference>
<dbReference type="Gene3D" id="1.20.1260.20">
    <property type="entry name" value="PPE superfamily"/>
    <property type="match status" value="1"/>
</dbReference>
<dbReference type="InterPro" id="IPR022171">
    <property type="entry name" value="PPE_C"/>
</dbReference>
<dbReference type="InterPro" id="IPR000030">
    <property type="entry name" value="PPE_dom"/>
</dbReference>
<dbReference type="InterPro" id="IPR038332">
    <property type="entry name" value="PPE_sf"/>
</dbReference>
<dbReference type="PANTHER" id="PTHR46766">
    <property type="entry name" value="GLUTAMINE-RICH PROTEIN 2"/>
    <property type="match status" value="1"/>
</dbReference>
<dbReference type="PANTHER" id="PTHR46766:SF1">
    <property type="entry name" value="GLUTAMINE-RICH PROTEIN 2"/>
    <property type="match status" value="1"/>
</dbReference>
<dbReference type="Pfam" id="PF00823">
    <property type="entry name" value="PPE"/>
    <property type="match status" value="1"/>
</dbReference>
<dbReference type="Pfam" id="PF12484">
    <property type="entry name" value="PPE-SVP"/>
    <property type="match status" value="1"/>
</dbReference>
<dbReference type="SUPFAM" id="SSF140459">
    <property type="entry name" value="PE/PPE dimer-like"/>
    <property type="match status" value="1"/>
</dbReference>
<gene>
    <name evidence="6" type="primary">PPE18</name>
    <name evidence="6" type="ordered locus">Rv1196</name>
</gene>
<feature type="chain" id="PRO_0000438002" description="PPE family protein PPE18">
    <location>
        <begin position="1"/>
        <end position="391"/>
    </location>
</feature>
<sequence length="391" mass="39158">MVDFGALPPEINSARMYAGPGSASLVAAAQMWDSVASDLFSAASAFQSVVWGLTVGSWIGSSAGLMVAAASPYVAWMSVTAGQAELTAAQVRVAAAAYETAYGLTVPPPVIAENRAELMILIATNLLGQNTPAIAVNEAEYGEMWAQDAAAMFGYAAATATATATLLPFEEAPEMTSAGGLLEQAAAVEEASDTAAANQLMNNVPQALQQLAQPTQGTTPSSKLGGLWKTVSPHRSPISNMVSMANNHMSMTNSGVSMTNTLSSMLKGFAPAAAAQAVQTAAQNGVRAMSSLGSSLGSSGLGGGVAANLGRAASVGSLSVPQAWAAANQAVTPAARALPLTSLTSAAERGPGQMLGGLPVGQMGARAGGGLSGVLRVPPRPYVMPHSPAAG</sequence>
<organism>
    <name type="scientific">Mycobacterium tuberculosis (strain ATCC 25618 / H37Rv)</name>
    <dbReference type="NCBI Taxonomy" id="83332"/>
    <lineage>
        <taxon>Bacteria</taxon>
        <taxon>Bacillati</taxon>
        <taxon>Actinomycetota</taxon>
        <taxon>Actinomycetes</taxon>
        <taxon>Mycobacteriales</taxon>
        <taxon>Mycobacteriaceae</taxon>
        <taxon>Mycobacterium</taxon>
        <taxon>Mycobacterium tuberculosis complex</taxon>
    </lineage>
</organism>
<accession>L7N675</accession>
<accession>I6Y9X0</accession>
<comment type="function">
    <text evidence="2 3 4">Could be a crucial virulence factor for intracellular survival of M.tuberculosis (PubMed:23300718). Favors development of Th2-type response, and down-regulates the pro-inflammatory and Th1-type response (PubMed:19880448, PubMed:21451109). Specifically interacts with the human Toll-like receptor 2 (TLR2), leading to an early and sustained activation of p38 MAPK, which induces IL-10 production and activates Th2-type immune response (PubMed:19880448). Also inhibits pro-inflammatory cytokines IL-12p40 and TNF-alpha production. Acts by up-regulating the expression as well as tyrosine phosphorylation of suppressor of cytokine signaling 3 (SOCS-3), leading to the inhibition of phosphorylation of I-kappa-B-alpha, thereby preventing nuclear translocation of the NF-kappa-B/REL subunits and expression of NF-kappa-B regulated genes like IL-12 and TNF-alpha. Induction of SOCS-3 probably depends on the activation of p38 MAPK (PubMed:21451109).</text>
</comment>
<comment type="subunit">
    <text evidence="2">Interacts with human TLR2.</text>
</comment>
<comment type="subcellular location">
    <subcellularLocation>
        <location evidence="2">Secreted</location>
        <location evidence="2">Cell wall</location>
    </subcellularLocation>
    <subcellularLocation>
        <location evidence="2">Cell surface</location>
    </subcellularLocation>
</comment>
<comment type="induction">
    <text evidence="1">Expression is positively regulated by Rv0485.</text>
</comment>
<comment type="domain">
    <text evidence="2 3">The N-terminal region is responsible for interaction with TLR2 (PubMed:19880448). It is also important in mediating tyrosine phosphorylation of SOCS-3 (PubMed:21451109).</text>
</comment>
<comment type="disruption phenotype">
    <text evidence="4">Mice infected with the ppe18 deleted strain have reduced infection burden in lung, liver and spleen and have better survival rates compared to mice infected with the wild-type train.</text>
</comment>
<comment type="similarity">
    <text evidence="5">Belongs to the mycobacterial PPE family.</text>
</comment>
<keyword id="KW-0134">Cell wall</keyword>
<keyword id="KW-1185">Reference proteome</keyword>
<keyword id="KW-0964">Secreted</keyword>
<keyword id="KW-0843">Virulence</keyword>